<proteinExistence type="inferred from homology"/>
<name>IXTPA_BIFLO</name>
<organism>
    <name type="scientific">Bifidobacterium longum (strain NCC 2705)</name>
    <dbReference type="NCBI Taxonomy" id="206672"/>
    <lineage>
        <taxon>Bacteria</taxon>
        <taxon>Bacillati</taxon>
        <taxon>Actinomycetota</taxon>
        <taxon>Actinomycetes</taxon>
        <taxon>Bifidobacteriales</taxon>
        <taxon>Bifidobacteriaceae</taxon>
        <taxon>Bifidobacterium</taxon>
    </lineage>
</organism>
<feature type="chain" id="PRO_0000178134" description="dITP/XTP pyrophosphatase">
    <location>
        <begin position="1"/>
        <end position="252"/>
    </location>
</feature>
<feature type="region of interest" description="Disordered" evidence="2">
    <location>
        <begin position="202"/>
        <end position="229"/>
    </location>
</feature>
<feature type="active site" description="Proton acceptor" evidence="1">
    <location>
        <position position="74"/>
    </location>
</feature>
<feature type="binding site" evidence="1">
    <location>
        <begin position="7"/>
        <end position="12"/>
    </location>
    <ligand>
        <name>substrate</name>
    </ligand>
</feature>
<feature type="binding site" evidence="1">
    <location>
        <position position="74"/>
    </location>
    <ligand>
        <name>Mg(2+)</name>
        <dbReference type="ChEBI" id="CHEBI:18420"/>
    </ligand>
</feature>
<feature type="binding site" evidence="1">
    <location>
        <position position="75"/>
    </location>
    <ligand>
        <name>substrate</name>
    </ligand>
</feature>
<feature type="binding site" evidence="1">
    <location>
        <begin position="193"/>
        <end position="196"/>
    </location>
    <ligand>
        <name>substrate</name>
    </ligand>
</feature>
<feature type="binding site" evidence="1">
    <location>
        <position position="230"/>
    </location>
    <ligand>
        <name>substrate</name>
    </ligand>
</feature>
<feature type="binding site" evidence="1">
    <location>
        <begin position="235"/>
        <end position="236"/>
    </location>
    <ligand>
        <name>substrate</name>
    </ligand>
</feature>
<evidence type="ECO:0000255" key="1">
    <source>
        <dbReference type="HAMAP-Rule" id="MF_01405"/>
    </source>
</evidence>
<evidence type="ECO:0000256" key="2">
    <source>
        <dbReference type="SAM" id="MobiDB-lite"/>
    </source>
</evidence>
<protein>
    <recommendedName>
        <fullName evidence="1">dITP/XTP pyrophosphatase</fullName>
        <ecNumber evidence="1">3.6.1.66</ecNumber>
    </recommendedName>
    <alternativeName>
        <fullName evidence="1">Non-canonical purine NTP pyrophosphatase</fullName>
    </alternativeName>
    <alternativeName>
        <fullName evidence="1">Non-standard purine NTP pyrophosphatase</fullName>
    </alternativeName>
    <alternativeName>
        <fullName evidence="1">Nucleoside-triphosphate diphosphatase</fullName>
    </alternativeName>
    <alternativeName>
        <fullName evidence="1">Nucleoside-triphosphate pyrophosphatase</fullName>
        <shortName evidence="1">NTPase</shortName>
    </alternativeName>
</protein>
<gene>
    <name type="ordered locus">BL0285</name>
</gene>
<comment type="function">
    <text evidence="1">Pyrophosphatase that catalyzes the hydrolysis of nucleoside triphosphates to their monophosphate derivatives, with a high preference for the non-canonical purine nucleotides XTP (xanthosine triphosphate), dITP (deoxyinosine triphosphate) and ITP. Seems to function as a house-cleaning enzyme that removes non-canonical purine nucleotides from the nucleotide pool, thus preventing their incorporation into DNA/RNA and avoiding chromosomal lesions.</text>
</comment>
<comment type="catalytic activity">
    <reaction evidence="1">
        <text>XTP + H2O = XMP + diphosphate + H(+)</text>
        <dbReference type="Rhea" id="RHEA:28610"/>
        <dbReference type="ChEBI" id="CHEBI:15377"/>
        <dbReference type="ChEBI" id="CHEBI:15378"/>
        <dbReference type="ChEBI" id="CHEBI:33019"/>
        <dbReference type="ChEBI" id="CHEBI:57464"/>
        <dbReference type="ChEBI" id="CHEBI:61314"/>
        <dbReference type="EC" id="3.6.1.66"/>
    </reaction>
</comment>
<comment type="catalytic activity">
    <reaction evidence="1">
        <text>dITP + H2O = dIMP + diphosphate + H(+)</text>
        <dbReference type="Rhea" id="RHEA:28342"/>
        <dbReference type="ChEBI" id="CHEBI:15377"/>
        <dbReference type="ChEBI" id="CHEBI:15378"/>
        <dbReference type="ChEBI" id="CHEBI:33019"/>
        <dbReference type="ChEBI" id="CHEBI:61194"/>
        <dbReference type="ChEBI" id="CHEBI:61382"/>
        <dbReference type="EC" id="3.6.1.66"/>
    </reaction>
</comment>
<comment type="catalytic activity">
    <reaction evidence="1">
        <text>ITP + H2O = IMP + diphosphate + H(+)</text>
        <dbReference type="Rhea" id="RHEA:29399"/>
        <dbReference type="ChEBI" id="CHEBI:15377"/>
        <dbReference type="ChEBI" id="CHEBI:15378"/>
        <dbReference type="ChEBI" id="CHEBI:33019"/>
        <dbReference type="ChEBI" id="CHEBI:58053"/>
        <dbReference type="ChEBI" id="CHEBI:61402"/>
        <dbReference type="EC" id="3.6.1.66"/>
    </reaction>
</comment>
<comment type="cofactor">
    <cofactor evidence="1">
        <name>Mg(2+)</name>
        <dbReference type="ChEBI" id="CHEBI:18420"/>
    </cofactor>
    <text evidence="1">Binds 1 Mg(2+) ion per subunit.</text>
</comment>
<comment type="subunit">
    <text evidence="1">Homodimer.</text>
</comment>
<comment type="similarity">
    <text evidence="1">Belongs to the HAM1 NTPase family.</text>
</comment>
<accession>Q8G7I1</accession>
<keyword id="KW-0378">Hydrolase</keyword>
<keyword id="KW-0460">Magnesium</keyword>
<keyword id="KW-0479">Metal-binding</keyword>
<keyword id="KW-0546">Nucleotide metabolism</keyword>
<keyword id="KW-0547">Nucleotide-binding</keyword>
<keyword id="KW-1185">Reference proteome</keyword>
<sequence>MQIVVATHNEGKLVEIRRILEEDLGADAENIELVSAGSLHLPDPVETGVTFQENALLKARAVAIRTGLPAVADDSGLIVDVMGNAPGILSARWAGAHGHDKANNALLLAQIEDIPDDKRTARFRCAAALVVPDTETGADVTGGVAADGITVHTTAADGSPAPVHARYAIKSETVELGDMPGRIIREARGVHGFGYDPLFVPDDQPAGRVSTEPDHEGEPLTSAEMTPAEKNAISHRGKALKALVPAIEALLH</sequence>
<reference key="1">
    <citation type="journal article" date="2002" name="Proc. Natl. Acad. Sci. U.S.A.">
        <title>The genome sequence of Bifidobacterium longum reflects its adaptation to the human gastrointestinal tract.</title>
        <authorList>
            <person name="Schell M.A."/>
            <person name="Karmirantzou M."/>
            <person name="Snel B."/>
            <person name="Vilanova D."/>
            <person name="Berger B."/>
            <person name="Pessi G."/>
            <person name="Zwahlen M.-C."/>
            <person name="Desiere F."/>
            <person name="Bork P."/>
            <person name="Delley M."/>
            <person name="Pridmore R.D."/>
            <person name="Arigoni F."/>
        </authorList>
    </citation>
    <scope>NUCLEOTIDE SEQUENCE [LARGE SCALE GENOMIC DNA]</scope>
    <source>
        <strain>NCC 2705</strain>
    </source>
</reference>
<dbReference type="EC" id="3.6.1.66" evidence="1"/>
<dbReference type="EMBL" id="AE014295">
    <property type="protein sequence ID" value="AAN24125.1"/>
    <property type="molecule type" value="Genomic_DNA"/>
</dbReference>
<dbReference type="RefSeq" id="NP_695489.1">
    <property type="nucleotide sequence ID" value="NC_004307.2"/>
</dbReference>
<dbReference type="RefSeq" id="WP_007051401.1">
    <property type="nucleotide sequence ID" value="NC_004307.2"/>
</dbReference>
<dbReference type="SMR" id="Q8G7I1"/>
<dbReference type="STRING" id="206672.BL0285"/>
<dbReference type="EnsemblBacteria" id="AAN24125">
    <property type="protein sequence ID" value="AAN24125"/>
    <property type="gene ID" value="BL0285"/>
</dbReference>
<dbReference type="KEGG" id="blo:BL0285"/>
<dbReference type="PATRIC" id="fig|206672.9.peg.1021"/>
<dbReference type="HOGENOM" id="CLU_082080_0_1_11"/>
<dbReference type="OrthoDB" id="9807456at2"/>
<dbReference type="PhylomeDB" id="Q8G7I1"/>
<dbReference type="Proteomes" id="UP000000439">
    <property type="component" value="Chromosome"/>
</dbReference>
<dbReference type="GO" id="GO:0005829">
    <property type="term" value="C:cytosol"/>
    <property type="evidence" value="ECO:0007669"/>
    <property type="project" value="TreeGrafter"/>
</dbReference>
<dbReference type="GO" id="GO:0035870">
    <property type="term" value="F:dITP diphosphatase activity"/>
    <property type="evidence" value="ECO:0007669"/>
    <property type="project" value="RHEA"/>
</dbReference>
<dbReference type="GO" id="GO:0036220">
    <property type="term" value="F:ITP diphosphatase activity"/>
    <property type="evidence" value="ECO:0007669"/>
    <property type="project" value="UniProtKB-EC"/>
</dbReference>
<dbReference type="GO" id="GO:0046872">
    <property type="term" value="F:metal ion binding"/>
    <property type="evidence" value="ECO:0007669"/>
    <property type="project" value="UniProtKB-KW"/>
</dbReference>
<dbReference type="GO" id="GO:0000166">
    <property type="term" value="F:nucleotide binding"/>
    <property type="evidence" value="ECO:0007669"/>
    <property type="project" value="UniProtKB-KW"/>
</dbReference>
<dbReference type="GO" id="GO:0017111">
    <property type="term" value="F:ribonucleoside triphosphate phosphatase activity"/>
    <property type="evidence" value="ECO:0007669"/>
    <property type="project" value="InterPro"/>
</dbReference>
<dbReference type="GO" id="GO:0036222">
    <property type="term" value="F:XTP diphosphatase activity"/>
    <property type="evidence" value="ECO:0007669"/>
    <property type="project" value="RHEA"/>
</dbReference>
<dbReference type="GO" id="GO:0009117">
    <property type="term" value="P:nucleotide metabolic process"/>
    <property type="evidence" value="ECO:0007669"/>
    <property type="project" value="UniProtKB-KW"/>
</dbReference>
<dbReference type="GO" id="GO:0009146">
    <property type="term" value="P:purine nucleoside triphosphate catabolic process"/>
    <property type="evidence" value="ECO:0007669"/>
    <property type="project" value="UniProtKB-UniRule"/>
</dbReference>
<dbReference type="CDD" id="cd00515">
    <property type="entry name" value="HAM1"/>
    <property type="match status" value="1"/>
</dbReference>
<dbReference type="Gene3D" id="3.90.950.10">
    <property type="match status" value="1"/>
</dbReference>
<dbReference type="HAMAP" id="MF_01405">
    <property type="entry name" value="Non_canon_purine_NTPase"/>
    <property type="match status" value="1"/>
</dbReference>
<dbReference type="InterPro" id="IPR020922">
    <property type="entry name" value="dITP/XTP_pyrophosphatase"/>
</dbReference>
<dbReference type="InterPro" id="IPR029001">
    <property type="entry name" value="ITPase-like_fam"/>
</dbReference>
<dbReference type="InterPro" id="IPR002637">
    <property type="entry name" value="RdgB/HAM1"/>
</dbReference>
<dbReference type="PANTHER" id="PTHR11067:SF9">
    <property type="entry name" value="INOSINE TRIPHOSPHATE PYROPHOSPHATASE"/>
    <property type="match status" value="1"/>
</dbReference>
<dbReference type="PANTHER" id="PTHR11067">
    <property type="entry name" value="INOSINE TRIPHOSPHATE PYROPHOSPHATASE/HAM1 PROTEIN"/>
    <property type="match status" value="1"/>
</dbReference>
<dbReference type="Pfam" id="PF01725">
    <property type="entry name" value="Ham1p_like"/>
    <property type="match status" value="2"/>
</dbReference>
<dbReference type="SUPFAM" id="SSF52972">
    <property type="entry name" value="ITPase-like"/>
    <property type="match status" value="1"/>
</dbReference>